<protein>
    <recommendedName>
        <fullName>Probable pectin lyase A</fullName>
        <shortName>PLA</shortName>
        <ecNumber>4.2.2.10</ecNumber>
    </recommendedName>
</protein>
<organism>
    <name type="scientific">Aspergillus oryzae (strain ATCC 42149 / RIB 40)</name>
    <name type="common">Yellow koji mold</name>
    <dbReference type="NCBI Taxonomy" id="510516"/>
    <lineage>
        <taxon>Eukaryota</taxon>
        <taxon>Fungi</taxon>
        <taxon>Dikarya</taxon>
        <taxon>Ascomycota</taxon>
        <taxon>Pezizomycotina</taxon>
        <taxon>Eurotiomycetes</taxon>
        <taxon>Eurotiomycetidae</taxon>
        <taxon>Eurotiales</taxon>
        <taxon>Aspergillaceae</taxon>
        <taxon>Aspergillus</taxon>
        <taxon>Aspergillus subgen. Circumdati</taxon>
    </lineage>
</organism>
<sequence>MKFALLSGVAAGLLPVVSAVSVSGAAEGFAKGVTGGGSAAAVYPTTTDELVSYLGDSSPRVIVLDRTFDFTGTEGTTTATGCAPWGTAAACQLAINQNDWCTNYQPDAPSVSVTYDNAGILGITVASDKTILGSGSSGVIKGKGLRIVSGASNIIIQNIAITDLNPKYVWGGDAITLNDADMVWIDHVTTARIGRQHLVLGNDADNRVTVSNSYFNGVSDYSATCDGYAYWGIYFAGSSDLITFKGNYIHHFSGRSPKVQENTLLHAVNNYWYDSTGHAFEIGAGGYVLAEGNVFQNIDTPVQSPIEGQLFTSPDTNTNTVCATYLGRNCEVNGFGSSGTFSQADTAFLVNFEGKNIASASPYADAQSSVPSSAGQGNL</sequence>
<evidence type="ECO:0000250" key="1"/>
<evidence type="ECO:0000255" key="2"/>
<evidence type="ECO:0000305" key="3"/>
<reference key="1">
    <citation type="journal article" date="2005" name="Nature">
        <title>Genome sequencing and analysis of Aspergillus oryzae.</title>
        <authorList>
            <person name="Machida M."/>
            <person name="Asai K."/>
            <person name="Sano M."/>
            <person name="Tanaka T."/>
            <person name="Kumagai T."/>
            <person name="Terai G."/>
            <person name="Kusumoto K."/>
            <person name="Arima T."/>
            <person name="Akita O."/>
            <person name="Kashiwagi Y."/>
            <person name="Abe K."/>
            <person name="Gomi K."/>
            <person name="Horiuchi H."/>
            <person name="Kitamoto K."/>
            <person name="Kobayashi T."/>
            <person name="Takeuchi M."/>
            <person name="Denning D.W."/>
            <person name="Galagan J.E."/>
            <person name="Nierman W.C."/>
            <person name="Yu J."/>
            <person name="Archer D.B."/>
            <person name="Bennett J.W."/>
            <person name="Bhatnagar D."/>
            <person name="Cleveland T.E."/>
            <person name="Fedorova N.D."/>
            <person name="Gotoh O."/>
            <person name="Horikawa H."/>
            <person name="Hosoyama A."/>
            <person name="Ichinomiya M."/>
            <person name="Igarashi R."/>
            <person name="Iwashita K."/>
            <person name="Juvvadi P.R."/>
            <person name="Kato M."/>
            <person name="Kato Y."/>
            <person name="Kin T."/>
            <person name="Kokubun A."/>
            <person name="Maeda H."/>
            <person name="Maeyama N."/>
            <person name="Maruyama J."/>
            <person name="Nagasaki H."/>
            <person name="Nakajima T."/>
            <person name="Oda K."/>
            <person name="Okada K."/>
            <person name="Paulsen I."/>
            <person name="Sakamoto K."/>
            <person name="Sawano T."/>
            <person name="Takahashi M."/>
            <person name="Takase K."/>
            <person name="Terabayashi Y."/>
            <person name="Wortman J.R."/>
            <person name="Yamada O."/>
            <person name="Yamagata Y."/>
            <person name="Anazawa H."/>
            <person name="Hata Y."/>
            <person name="Koide Y."/>
            <person name="Komori T."/>
            <person name="Koyama Y."/>
            <person name="Minetoki T."/>
            <person name="Suharnan S."/>
            <person name="Tanaka A."/>
            <person name="Isono K."/>
            <person name="Kuhara S."/>
            <person name="Ogasawara N."/>
            <person name="Kikuchi H."/>
        </authorList>
    </citation>
    <scope>NUCLEOTIDE SEQUENCE [LARGE SCALE GENOMIC DNA]</scope>
    <source>
        <strain>ATCC 42149 / RIB 40</strain>
    </source>
</reference>
<feature type="signal peptide" evidence="2">
    <location>
        <begin position="1"/>
        <end position="19"/>
    </location>
</feature>
<feature type="chain" id="PRO_0000394341" description="Probable pectin lyase A">
    <location>
        <begin position="20"/>
        <end position="379"/>
    </location>
</feature>
<feature type="active site" evidence="2">
    <location>
        <position position="255"/>
    </location>
</feature>
<feature type="disulfide bond" evidence="1">
    <location>
        <begin position="82"/>
        <end position="101"/>
    </location>
</feature>
<feature type="disulfide bond" evidence="1">
    <location>
        <begin position="91"/>
        <end position="225"/>
    </location>
</feature>
<feature type="disulfide bond" evidence="1">
    <location>
        <begin position="322"/>
        <end position="330"/>
    </location>
</feature>
<keyword id="KW-0119">Carbohydrate metabolism</keyword>
<keyword id="KW-0961">Cell wall biogenesis/degradation</keyword>
<keyword id="KW-1015">Disulfide bond</keyword>
<keyword id="KW-0456">Lyase</keyword>
<keyword id="KW-0624">Polysaccharide degradation</keyword>
<keyword id="KW-1185">Reference proteome</keyword>
<keyword id="KW-0964">Secreted</keyword>
<keyword id="KW-0732">Signal</keyword>
<comment type="function">
    <text evidence="1">Pectinolytic enzymes consist of four classes of enzymes: pectin lyase, polygalacturonase, pectin methylesterase and rhamnogalacturonase. Among pectinolytic enzymes, pectin lyase is the most important in depolymerization of pectin, since it cleaves internal glycosidic bonds of highly methylated pectins (By similarity).</text>
</comment>
<comment type="catalytic activity">
    <reaction>
        <text>Eliminative cleavage of (1-&gt;4)-alpha-D-galacturonan methyl ester to give oligosaccharides with 4-deoxy-6-O-methyl-alpha-D-galact-4-enuronosyl groups at their non-reducing ends.</text>
        <dbReference type="EC" id="4.2.2.10"/>
    </reaction>
</comment>
<comment type="subcellular location">
    <subcellularLocation>
        <location evidence="1">Secreted</location>
    </subcellularLocation>
</comment>
<comment type="similarity">
    <text evidence="3">Belongs to the polysaccharide lyase 1 family.</text>
</comment>
<accession>Q2TXM4</accession>
<gene>
    <name type="primary">pelA</name>
    <name type="ORF">AO090010000087</name>
</gene>
<dbReference type="EC" id="4.2.2.10"/>
<dbReference type="EMBL" id="BA000056">
    <property type="protein sequence ID" value="BAE65999.1"/>
    <property type="molecule type" value="Genomic_DNA"/>
</dbReference>
<dbReference type="RefSeq" id="XP_001827132.1">
    <property type="nucleotide sequence ID" value="XM_001827080.1"/>
</dbReference>
<dbReference type="SMR" id="Q2TXM4"/>
<dbReference type="STRING" id="510516.Q2TXM4"/>
<dbReference type="CAZy" id="PL1">
    <property type="family name" value="Polysaccharide Lyase Family 1"/>
</dbReference>
<dbReference type="EnsemblFungi" id="BAE65999">
    <property type="protein sequence ID" value="BAE65999"/>
    <property type="gene ID" value="AO090010000087"/>
</dbReference>
<dbReference type="GeneID" id="5999266"/>
<dbReference type="KEGG" id="aor:AO090010000087"/>
<dbReference type="VEuPathDB" id="FungiDB:AO090010000087"/>
<dbReference type="HOGENOM" id="CLU_021980_0_1_1"/>
<dbReference type="OMA" id="YLGHVCQ"/>
<dbReference type="OrthoDB" id="88760at5052"/>
<dbReference type="Proteomes" id="UP000006564">
    <property type="component" value="Chromosome 8"/>
</dbReference>
<dbReference type="GO" id="GO:0005576">
    <property type="term" value="C:extracellular region"/>
    <property type="evidence" value="ECO:0007669"/>
    <property type="project" value="UniProtKB-SubCell"/>
</dbReference>
<dbReference type="GO" id="GO:0030570">
    <property type="term" value="F:pectate lyase activity"/>
    <property type="evidence" value="ECO:0007669"/>
    <property type="project" value="InterPro"/>
</dbReference>
<dbReference type="GO" id="GO:0047490">
    <property type="term" value="F:pectin lyase activity"/>
    <property type="evidence" value="ECO:0000250"/>
    <property type="project" value="UniProtKB"/>
</dbReference>
<dbReference type="GO" id="GO:0071555">
    <property type="term" value="P:cell wall organization"/>
    <property type="evidence" value="ECO:0007669"/>
    <property type="project" value="UniProtKB-KW"/>
</dbReference>
<dbReference type="GO" id="GO:0045490">
    <property type="term" value="P:pectin catabolic process"/>
    <property type="evidence" value="ECO:0000250"/>
    <property type="project" value="UniProtKB"/>
</dbReference>
<dbReference type="FunFam" id="2.160.20.10:FF:000003">
    <property type="entry name" value="Pectin lyase F"/>
    <property type="match status" value="1"/>
</dbReference>
<dbReference type="Gene3D" id="2.160.20.10">
    <property type="entry name" value="Single-stranded right-handed beta-helix, Pectin lyase-like"/>
    <property type="match status" value="1"/>
</dbReference>
<dbReference type="InterPro" id="IPR002022">
    <property type="entry name" value="Pec_lyase"/>
</dbReference>
<dbReference type="InterPro" id="IPR012334">
    <property type="entry name" value="Pectin_lyas_fold"/>
</dbReference>
<dbReference type="InterPro" id="IPR011050">
    <property type="entry name" value="Pectin_lyase_fold/virulence"/>
</dbReference>
<dbReference type="InterPro" id="IPR045032">
    <property type="entry name" value="PEL"/>
</dbReference>
<dbReference type="PANTHER" id="PTHR31683">
    <property type="entry name" value="PECTATE LYASE 18-RELATED"/>
    <property type="match status" value="1"/>
</dbReference>
<dbReference type="PANTHER" id="PTHR31683:SF16">
    <property type="entry name" value="PECTIN LYASE A-RELATED"/>
    <property type="match status" value="1"/>
</dbReference>
<dbReference type="Pfam" id="PF00544">
    <property type="entry name" value="Pectate_lyase_4"/>
    <property type="match status" value="1"/>
</dbReference>
<dbReference type="SMART" id="SM00656">
    <property type="entry name" value="Amb_all"/>
    <property type="match status" value="1"/>
</dbReference>
<dbReference type="SUPFAM" id="SSF51126">
    <property type="entry name" value="Pectin lyase-like"/>
    <property type="match status" value="1"/>
</dbReference>
<proteinExistence type="inferred from homology"/>
<name>PELA_ASPOR</name>